<reference key="1">
    <citation type="journal article" date="2007" name="PLoS Genet.">
        <title>Meningococcal genetic variation mechanisms viewed through comparative analysis of serogroup C strain FAM18.</title>
        <authorList>
            <person name="Bentley S.D."/>
            <person name="Vernikos G.S."/>
            <person name="Snyder L.A.S."/>
            <person name="Churcher C."/>
            <person name="Arrowsmith C."/>
            <person name="Chillingworth T."/>
            <person name="Cronin A."/>
            <person name="Davis P.H."/>
            <person name="Holroyd N.E."/>
            <person name="Jagels K."/>
            <person name="Maddison M."/>
            <person name="Moule S."/>
            <person name="Rabbinowitsch E."/>
            <person name="Sharp S."/>
            <person name="Unwin L."/>
            <person name="Whitehead S."/>
            <person name="Quail M.A."/>
            <person name="Achtman M."/>
            <person name="Barrell B.G."/>
            <person name="Saunders N.J."/>
            <person name="Parkhill J."/>
        </authorList>
    </citation>
    <scope>NUCLEOTIDE SEQUENCE [LARGE SCALE GENOMIC DNA]</scope>
    <source>
        <strain>ATCC 700532 / DSM 15464 / FAM18</strain>
    </source>
</reference>
<accession>A1KV88</accession>
<sequence>MSDYTQQLQDKKDHLKTLFAGLDVPEWEVYESPDKHYRMRAEFRIWHEGGEMFYAMFEKGQKAGGASLIRCDRFEAASEAVNRLMPELIAVAAQSAELRNRWYAVEFLSTLSGEMLVTMIYHKRLDNEWMQAAQALQQQLDISVIGRSRGQKIVLKQDYVTETLKVGNRDFRYRQIEGSFTQPNAAVCQKMLEWACGAAEGLDGDLLELYCGNGNFTLPLSEKFERVLATEISKTSVSAAQWNIEANRIGNIKIARLSAEEFTEAYTGKREFKRLKDGGIALTDYAFSTIFVDPPRAGIDEETLKLVSQFDNIIYISCNPETLRTNLDTLAETHTVERAALFDQFPFTHHIESGVLLKKKILGKSKR</sequence>
<comment type="function">
    <text evidence="1">Dual-specificity methyltransferase that catalyzes the formation of 5-methyluridine at position 54 (m5U54) in all tRNAs, and that of position 341 (m5U341) in tmRNA (transfer-mRNA).</text>
</comment>
<comment type="catalytic activity">
    <reaction evidence="1">
        <text>uridine(54) in tRNA + S-adenosyl-L-methionine = 5-methyluridine(54) in tRNA + S-adenosyl-L-homocysteine + H(+)</text>
        <dbReference type="Rhea" id="RHEA:42712"/>
        <dbReference type="Rhea" id="RHEA-COMP:10167"/>
        <dbReference type="Rhea" id="RHEA-COMP:10193"/>
        <dbReference type="ChEBI" id="CHEBI:15378"/>
        <dbReference type="ChEBI" id="CHEBI:57856"/>
        <dbReference type="ChEBI" id="CHEBI:59789"/>
        <dbReference type="ChEBI" id="CHEBI:65315"/>
        <dbReference type="ChEBI" id="CHEBI:74447"/>
        <dbReference type="EC" id="2.1.1.35"/>
    </reaction>
</comment>
<comment type="catalytic activity">
    <reaction evidence="1">
        <text>uridine(341) in tmRNA + S-adenosyl-L-methionine = 5-methyluridine(341) in tmRNA + S-adenosyl-L-homocysteine + H(+)</text>
        <dbReference type="Rhea" id="RHEA:43612"/>
        <dbReference type="Rhea" id="RHEA-COMP:10630"/>
        <dbReference type="Rhea" id="RHEA-COMP:10631"/>
        <dbReference type="ChEBI" id="CHEBI:15378"/>
        <dbReference type="ChEBI" id="CHEBI:57856"/>
        <dbReference type="ChEBI" id="CHEBI:59789"/>
        <dbReference type="ChEBI" id="CHEBI:65315"/>
        <dbReference type="ChEBI" id="CHEBI:74447"/>
    </reaction>
</comment>
<comment type="similarity">
    <text evidence="1">Belongs to the class I-like SAM-binding methyltransferase superfamily. RNA M5U methyltransferase family. TrmA subfamily.</text>
</comment>
<name>TRMA_NEIMF</name>
<protein>
    <recommendedName>
        <fullName evidence="1">tRNA/tmRNA (uracil-C(5))-methyltransferase</fullName>
        <ecNumber evidence="1">2.1.1.-</ecNumber>
        <ecNumber evidence="1">2.1.1.35</ecNumber>
    </recommendedName>
    <alternativeName>
        <fullName evidence="1">tRNA (uracil(54)-C(5))-methyltransferase</fullName>
    </alternativeName>
    <alternativeName>
        <fullName evidence="1">tRNA(m5U54)-methyltransferase</fullName>
        <shortName evidence="1">RUMT</shortName>
    </alternativeName>
    <alternativeName>
        <fullName evidence="1">tmRNA (uracil(341)-C(5))-methyltransferase</fullName>
    </alternativeName>
</protein>
<feature type="chain" id="PRO_0000388560" description="tRNA/tmRNA (uracil-C(5))-methyltransferase">
    <location>
        <begin position="1"/>
        <end position="367"/>
    </location>
</feature>
<feature type="active site" description="Nucleophile" evidence="1">
    <location>
        <position position="318"/>
    </location>
</feature>
<feature type="active site" description="Proton acceptor" evidence="1">
    <location>
        <position position="352"/>
    </location>
</feature>
<feature type="binding site" evidence="1">
    <location>
        <position position="182"/>
    </location>
    <ligand>
        <name>S-adenosyl-L-methionine</name>
        <dbReference type="ChEBI" id="CHEBI:59789"/>
    </ligand>
</feature>
<feature type="binding site" evidence="1">
    <location>
        <position position="210"/>
    </location>
    <ligand>
        <name>S-adenosyl-L-methionine</name>
        <dbReference type="ChEBI" id="CHEBI:59789"/>
    </ligand>
</feature>
<feature type="binding site" evidence="1">
    <location>
        <position position="215"/>
    </location>
    <ligand>
        <name>S-adenosyl-L-methionine</name>
        <dbReference type="ChEBI" id="CHEBI:59789"/>
    </ligand>
</feature>
<feature type="binding site" evidence="1">
    <location>
        <position position="231"/>
    </location>
    <ligand>
        <name>S-adenosyl-L-methionine</name>
        <dbReference type="ChEBI" id="CHEBI:59789"/>
    </ligand>
</feature>
<feature type="binding site" evidence="1">
    <location>
        <position position="293"/>
    </location>
    <ligand>
        <name>S-adenosyl-L-methionine</name>
        <dbReference type="ChEBI" id="CHEBI:59789"/>
    </ligand>
</feature>
<keyword id="KW-0489">Methyltransferase</keyword>
<keyword id="KW-0949">S-adenosyl-L-methionine</keyword>
<keyword id="KW-0808">Transferase</keyword>
<keyword id="KW-0819">tRNA processing</keyword>
<evidence type="ECO:0000255" key="1">
    <source>
        <dbReference type="HAMAP-Rule" id="MF_01011"/>
    </source>
</evidence>
<dbReference type="EC" id="2.1.1.-" evidence="1"/>
<dbReference type="EC" id="2.1.1.35" evidence="1"/>
<dbReference type="EMBL" id="AM421808">
    <property type="protein sequence ID" value="CAM10789.1"/>
    <property type="molecule type" value="Genomic_DNA"/>
</dbReference>
<dbReference type="RefSeq" id="WP_002220458.1">
    <property type="nucleotide sequence ID" value="NC_008767.1"/>
</dbReference>
<dbReference type="SMR" id="A1KV88"/>
<dbReference type="KEGG" id="nmc:NMC1597"/>
<dbReference type="HOGENOM" id="CLU_043022_0_0_4"/>
<dbReference type="Proteomes" id="UP000002286">
    <property type="component" value="Chromosome"/>
</dbReference>
<dbReference type="GO" id="GO:0005829">
    <property type="term" value="C:cytosol"/>
    <property type="evidence" value="ECO:0007669"/>
    <property type="project" value="TreeGrafter"/>
</dbReference>
<dbReference type="GO" id="GO:0019843">
    <property type="term" value="F:rRNA binding"/>
    <property type="evidence" value="ECO:0007669"/>
    <property type="project" value="TreeGrafter"/>
</dbReference>
<dbReference type="GO" id="GO:0030697">
    <property type="term" value="F:tRNA (uracil(54)-C5)-methyltransferase activity, S-adenosyl methionine-dependent"/>
    <property type="evidence" value="ECO:0007669"/>
    <property type="project" value="UniProtKB-UniRule"/>
</dbReference>
<dbReference type="GO" id="GO:0000049">
    <property type="term" value="F:tRNA binding"/>
    <property type="evidence" value="ECO:0007669"/>
    <property type="project" value="TreeGrafter"/>
</dbReference>
<dbReference type="GO" id="GO:0030488">
    <property type="term" value="P:tRNA methylation"/>
    <property type="evidence" value="ECO:0007669"/>
    <property type="project" value="UniProtKB-UniRule"/>
</dbReference>
<dbReference type="CDD" id="cd02440">
    <property type="entry name" value="AdoMet_MTases"/>
    <property type="match status" value="1"/>
</dbReference>
<dbReference type="FunFam" id="2.40.50.1070:FF:000001">
    <property type="entry name" value="tRNA/tmRNA (uracil-C(5))-methyltransferase"/>
    <property type="match status" value="1"/>
</dbReference>
<dbReference type="FunFam" id="3.40.50.150:FF:000012">
    <property type="entry name" value="tRNA/tmRNA (uracil-C(5))-methyltransferase"/>
    <property type="match status" value="1"/>
</dbReference>
<dbReference type="Gene3D" id="2.40.50.1070">
    <property type="match status" value="1"/>
</dbReference>
<dbReference type="Gene3D" id="3.40.50.150">
    <property type="entry name" value="Vaccinia Virus protein VP39"/>
    <property type="match status" value="1"/>
</dbReference>
<dbReference type="HAMAP" id="MF_01011">
    <property type="entry name" value="RNA_methyltr_TrmA"/>
    <property type="match status" value="1"/>
</dbReference>
<dbReference type="InterPro" id="IPR030390">
    <property type="entry name" value="MeTrfase_TrmA_AS"/>
</dbReference>
<dbReference type="InterPro" id="IPR029063">
    <property type="entry name" value="SAM-dependent_MTases_sf"/>
</dbReference>
<dbReference type="InterPro" id="IPR011869">
    <property type="entry name" value="TrmA_MeTrfase"/>
</dbReference>
<dbReference type="InterPro" id="IPR010280">
    <property type="entry name" value="U5_MeTrfase_fam"/>
</dbReference>
<dbReference type="NCBIfam" id="TIGR02143">
    <property type="entry name" value="trmA_only"/>
    <property type="match status" value="1"/>
</dbReference>
<dbReference type="PANTHER" id="PTHR47790">
    <property type="entry name" value="TRNA/TMRNA (URACIL-C(5))-METHYLTRANSFERASE"/>
    <property type="match status" value="1"/>
</dbReference>
<dbReference type="PANTHER" id="PTHR47790:SF2">
    <property type="entry name" value="TRNA_TMRNA (URACIL-C(5))-METHYLTRANSFERASE"/>
    <property type="match status" value="1"/>
</dbReference>
<dbReference type="Pfam" id="PF05958">
    <property type="entry name" value="tRNA_U5-meth_tr"/>
    <property type="match status" value="1"/>
</dbReference>
<dbReference type="SUPFAM" id="SSF53335">
    <property type="entry name" value="S-adenosyl-L-methionine-dependent methyltransferases"/>
    <property type="match status" value="1"/>
</dbReference>
<dbReference type="PROSITE" id="PS51687">
    <property type="entry name" value="SAM_MT_RNA_M5U"/>
    <property type="match status" value="1"/>
</dbReference>
<dbReference type="PROSITE" id="PS01230">
    <property type="entry name" value="TRMA_1"/>
    <property type="match status" value="1"/>
</dbReference>
<gene>
    <name evidence="1" type="primary">trmA</name>
    <name type="ordered locus">NMC1597</name>
</gene>
<organism>
    <name type="scientific">Neisseria meningitidis serogroup C / serotype 2a (strain ATCC 700532 / DSM 15464 / FAM18)</name>
    <dbReference type="NCBI Taxonomy" id="272831"/>
    <lineage>
        <taxon>Bacteria</taxon>
        <taxon>Pseudomonadati</taxon>
        <taxon>Pseudomonadota</taxon>
        <taxon>Betaproteobacteria</taxon>
        <taxon>Neisseriales</taxon>
        <taxon>Neisseriaceae</taxon>
        <taxon>Neisseria</taxon>
    </lineage>
</organism>
<proteinExistence type="inferred from homology"/>